<feature type="chain" id="PRO_0000262552" description="Secernin-2">
    <location>
        <begin position="1"/>
        <end position="425"/>
    </location>
</feature>
<feature type="active site" evidence="1">
    <location>
        <position position="12"/>
    </location>
</feature>
<feature type="modified residue" description="Phosphothreonine" evidence="8 9">
    <location>
        <position position="52"/>
    </location>
</feature>
<feature type="splice variant" id="VSP_044566" description="In isoform 2." evidence="5 6">
    <original>DRGQQLQQKQQDLEQEGLEATQGLLAGEWAPPLWELGSLFQAFVKRESQAYA</original>
    <variation>VSPRE</variation>
    <location>
        <begin position="374"/>
        <end position="425"/>
    </location>
</feature>
<feature type="sequence variant" id="VAR_029509" description="In dbSNP:rs17856536." evidence="3">
    <original>K</original>
    <variation>R</variation>
    <location>
        <position position="103"/>
    </location>
</feature>
<feature type="sequence variant" id="VAR_035263" description="In dbSNP:rs35901087.">
    <original>E</original>
    <variation>Q</variation>
    <location>
        <position position="273"/>
    </location>
</feature>
<feature type="sequence variant" id="VAR_029510" description="In dbSNP:rs7350974." evidence="2 3 4">
    <original>M</original>
    <variation>V</variation>
    <location>
        <position position="323"/>
    </location>
</feature>
<feature type="sequence variant" id="VAR_035264" description="In dbSNP:rs34480825.">
    <original>Q</original>
    <variation>R</variation>
    <location>
        <position position="330"/>
    </location>
</feature>
<feature type="sequence variant" id="VAR_029511" description="In dbSNP:rs17856535." evidence="3">
    <original>S</original>
    <variation>G</variation>
    <location>
        <position position="411"/>
    </location>
</feature>
<sequence length="425" mass="46597">MASSSPDSPCSCDCFVSVPPASAIPAVIFAKNSDRPRDEVQEVVFVPAGTHTPGSRLQCTYIEVEQVSKTHAVILSRPSWLWGAEMGANEHGVCIGNEAVWTKEPVGEGEALLGMDLLRLALERSSSAQEALHVITGLLEHYGQGGNCLEDAAPFSYHSTFLLADRTEAWVLETAGRLWAAQRIQEGARNISNQLSIGTDISAQHPELRTHAQAKGWWDGQGAFDFAQIFSLTQQPVRMEAAKARFQAGRELLRQRQGGITAEVMMGILRDKESGICMDSGGFRTTASMVSVLPQDPTQPCVHFLTATPDPSRSVFKPFIFGMGVAQAPQVLSPTFGAQDPVRTLPRFQTQVDRRHTLYRGHQAALGLMERDQDRGQQLQQKQQDLEQEGLEATQGLLAGEWAPPLWELGSLFQAFVKRESQAYA</sequence>
<organism>
    <name type="scientific">Homo sapiens</name>
    <name type="common">Human</name>
    <dbReference type="NCBI Taxonomy" id="9606"/>
    <lineage>
        <taxon>Eukaryota</taxon>
        <taxon>Metazoa</taxon>
        <taxon>Chordata</taxon>
        <taxon>Craniata</taxon>
        <taxon>Vertebrata</taxon>
        <taxon>Euteleostomi</taxon>
        <taxon>Mammalia</taxon>
        <taxon>Eutheria</taxon>
        <taxon>Euarchontoglires</taxon>
        <taxon>Primates</taxon>
        <taxon>Haplorrhini</taxon>
        <taxon>Catarrhini</taxon>
        <taxon>Hominidae</taxon>
        <taxon>Homo</taxon>
    </lineage>
</organism>
<comment type="interaction">
    <interactant intactId="EBI-11306862">
        <id>Q96FV2</id>
    </interactant>
    <interactant intactId="EBI-399080">
        <id>Q92993</id>
        <label>KAT5</label>
    </interactant>
    <organismsDiffer>false</organismsDiffer>
    <experiments>3</experiments>
</comment>
<comment type="interaction">
    <interactant intactId="EBI-11306862">
        <id>Q96FV2</id>
    </interactant>
    <interactant intactId="EBI-16439278">
        <id>Q6FHY5</id>
        <label>MEOX2</label>
    </interactant>
    <organismsDiffer>false</organismsDiffer>
    <experiments>3</experiments>
</comment>
<comment type="interaction">
    <interactant intactId="EBI-11306862">
        <id>Q96FV2</id>
    </interactant>
    <interactant intactId="EBI-12181987">
        <id>P50542-3</id>
        <label>PEX5</label>
    </interactant>
    <organismsDiffer>false</organismsDiffer>
    <experiments>3</experiments>
</comment>
<comment type="interaction">
    <interactant intactId="EBI-11306862">
        <id>Q96FV2</id>
    </interactant>
    <interactant intactId="EBI-717399">
        <id>Q9BSI4</id>
        <label>TINF2</label>
    </interactant>
    <organismsDiffer>false</organismsDiffer>
    <experiments>2</experiments>
</comment>
<comment type="alternative products">
    <event type="alternative splicing"/>
    <isoform>
        <id>Q96FV2-1</id>
        <name>1</name>
        <sequence type="displayed"/>
    </isoform>
    <isoform>
        <id>Q96FV2-2</id>
        <name>2</name>
        <sequence type="described" ref="VSP_044566"/>
    </isoform>
</comment>
<comment type="similarity">
    <text evidence="7">Belongs to the peptidase C69 family. Secernin subfamily.</text>
</comment>
<comment type="sequence caution" evidence="7">
    <conflict type="erroneous initiation">
        <sequence resource="EMBL-CDS" id="AAH10408"/>
    </conflict>
    <text>Extended N-terminus.</text>
</comment>
<protein>
    <recommendedName>
        <fullName>Secernin-2</fullName>
    </recommendedName>
</protein>
<dbReference type="EMBL" id="AK290646">
    <property type="protein sequence ID" value="BAF83335.1"/>
    <property type="molecule type" value="mRNA"/>
</dbReference>
<dbReference type="EMBL" id="AK303835">
    <property type="protein sequence ID" value="BAH14063.1"/>
    <property type="molecule type" value="mRNA"/>
</dbReference>
<dbReference type="EMBL" id="AC003665">
    <property type="status" value="NOT_ANNOTATED_CDS"/>
    <property type="molecule type" value="Genomic_DNA"/>
</dbReference>
<dbReference type="EMBL" id="CH471109">
    <property type="protein sequence ID" value="EAW94791.1"/>
    <property type="molecule type" value="Genomic_DNA"/>
</dbReference>
<dbReference type="EMBL" id="CH471109">
    <property type="protein sequence ID" value="EAW94792.1"/>
    <property type="molecule type" value="Genomic_DNA"/>
</dbReference>
<dbReference type="EMBL" id="BC002980">
    <property type="protein sequence ID" value="AAH02980.1"/>
    <property type="molecule type" value="mRNA"/>
</dbReference>
<dbReference type="EMBL" id="BC010408">
    <property type="protein sequence ID" value="AAH10408.2"/>
    <property type="status" value="ALT_INIT"/>
    <property type="molecule type" value="mRNA"/>
</dbReference>
<dbReference type="EMBL" id="BC017317">
    <property type="protein sequence ID" value="AAH17317.1"/>
    <property type="molecule type" value="mRNA"/>
</dbReference>
<dbReference type="CCDS" id="CCDS11519.1">
    <molecule id="Q96FV2-1"/>
</dbReference>
<dbReference type="CCDS" id="CCDS45723.1">
    <molecule id="Q96FV2-2"/>
</dbReference>
<dbReference type="RefSeq" id="NP_001138495.1">
    <molecule id="Q96FV2-2"/>
    <property type="nucleotide sequence ID" value="NM_001145023.2"/>
</dbReference>
<dbReference type="RefSeq" id="NP_612364.2">
    <molecule id="Q96FV2-1"/>
    <property type="nucleotide sequence ID" value="NM_138355.4"/>
</dbReference>
<dbReference type="RefSeq" id="XP_005257833.1">
    <molecule id="Q96FV2-1"/>
    <property type="nucleotide sequence ID" value="XM_005257776.6"/>
</dbReference>
<dbReference type="SMR" id="Q96FV2"/>
<dbReference type="BioGRID" id="124726">
    <property type="interactions" value="32"/>
</dbReference>
<dbReference type="FunCoup" id="Q96FV2">
    <property type="interactions" value="155"/>
</dbReference>
<dbReference type="IntAct" id="Q96FV2">
    <property type="interactions" value="17"/>
</dbReference>
<dbReference type="STRING" id="9606.ENSP00000290216"/>
<dbReference type="MEROPS" id="C69.004"/>
<dbReference type="iPTMnet" id="Q96FV2"/>
<dbReference type="MetOSite" id="Q96FV2"/>
<dbReference type="PhosphoSitePlus" id="Q96FV2"/>
<dbReference type="SwissPalm" id="Q96FV2"/>
<dbReference type="BioMuta" id="SCRN2"/>
<dbReference type="DMDM" id="317373511"/>
<dbReference type="REPRODUCTION-2DPAGE" id="IPI00062266"/>
<dbReference type="jPOST" id="Q96FV2"/>
<dbReference type="MassIVE" id="Q96FV2"/>
<dbReference type="PaxDb" id="9606-ENSP00000290216"/>
<dbReference type="PeptideAtlas" id="Q96FV2"/>
<dbReference type="ProteomicsDB" id="19303"/>
<dbReference type="ProteomicsDB" id="76559">
    <molecule id="Q96FV2-1"/>
</dbReference>
<dbReference type="Pumba" id="Q96FV2"/>
<dbReference type="Antibodypedia" id="17779">
    <property type="antibodies" value="165 antibodies from 30 providers"/>
</dbReference>
<dbReference type="DNASU" id="90507"/>
<dbReference type="Ensembl" id="ENST00000290216.14">
    <molecule id="Q96FV2-1"/>
    <property type="protein sequence ID" value="ENSP00000290216.9"/>
    <property type="gene ID" value="ENSG00000141295.14"/>
</dbReference>
<dbReference type="Ensembl" id="ENST00000407215.7">
    <molecule id="Q96FV2-2"/>
    <property type="protein sequence ID" value="ENSP00000383935.3"/>
    <property type="gene ID" value="ENSG00000141295.14"/>
</dbReference>
<dbReference type="GeneID" id="90507"/>
<dbReference type="KEGG" id="hsa:90507"/>
<dbReference type="MANE-Select" id="ENST00000290216.14">
    <property type="protein sequence ID" value="ENSP00000290216.9"/>
    <property type="RefSeq nucleotide sequence ID" value="NM_138355.4"/>
    <property type="RefSeq protein sequence ID" value="NP_612364.2"/>
</dbReference>
<dbReference type="UCSC" id="uc002imd.4">
    <molecule id="Q96FV2-1"/>
    <property type="organism name" value="human"/>
</dbReference>
<dbReference type="AGR" id="HGNC:30381"/>
<dbReference type="CTD" id="90507"/>
<dbReference type="GeneCards" id="SCRN2"/>
<dbReference type="HGNC" id="HGNC:30381">
    <property type="gene designation" value="SCRN2"/>
</dbReference>
<dbReference type="HPA" id="ENSG00000141295">
    <property type="expression patterns" value="Low tissue specificity"/>
</dbReference>
<dbReference type="MIM" id="614966">
    <property type="type" value="gene"/>
</dbReference>
<dbReference type="neXtProt" id="NX_Q96FV2"/>
<dbReference type="OpenTargets" id="ENSG00000141295"/>
<dbReference type="PharmGKB" id="PA134964266"/>
<dbReference type="VEuPathDB" id="HostDB:ENSG00000141295"/>
<dbReference type="eggNOG" id="ENOG502QPIA">
    <property type="taxonomic scope" value="Eukaryota"/>
</dbReference>
<dbReference type="GeneTree" id="ENSGT00390000013474"/>
<dbReference type="HOGENOM" id="CLU_046840_0_0_1"/>
<dbReference type="InParanoid" id="Q96FV2"/>
<dbReference type="OrthoDB" id="5175656at2759"/>
<dbReference type="PAN-GO" id="Q96FV2">
    <property type="GO annotations" value="0 GO annotations based on evolutionary models"/>
</dbReference>
<dbReference type="PhylomeDB" id="Q96FV2"/>
<dbReference type="TreeFam" id="TF323890"/>
<dbReference type="PathwayCommons" id="Q96FV2"/>
<dbReference type="SignaLink" id="Q96FV2"/>
<dbReference type="BioGRID-ORCS" id="90507">
    <property type="hits" value="36 hits in 1154 CRISPR screens"/>
</dbReference>
<dbReference type="ChiTaRS" id="SCRN2">
    <property type="organism name" value="human"/>
</dbReference>
<dbReference type="GenomeRNAi" id="90507"/>
<dbReference type="Pharos" id="Q96FV2">
    <property type="development level" value="Tdark"/>
</dbReference>
<dbReference type="PRO" id="PR:Q96FV2"/>
<dbReference type="Proteomes" id="UP000005640">
    <property type="component" value="Chromosome 17"/>
</dbReference>
<dbReference type="RNAct" id="Q96FV2">
    <property type="molecule type" value="protein"/>
</dbReference>
<dbReference type="Bgee" id="ENSG00000141295">
    <property type="expression patterns" value="Expressed in apex of heart and 165 other cell types or tissues"/>
</dbReference>
<dbReference type="ExpressionAtlas" id="Q96FV2">
    <property type="expression patterns" value="baseline and differential"/>
</dbReference>
<dbReference type="GO" id="GO:0070062">
    <property type="term" value="C:extracellular exosome"/>
    <property type="evidence" value="ECO:0007005"/>
    <property type="project" value="UniProtKB"/>
</dbReference>
<dbReference type="GO" id="GO:0070004">
    <property type="term" value="F:cysteine-type exopeptidase activity"/>
    <property type="evidence" value="ECO:0007669"/>
    <property type="project" value="InterPro"/>
</dbReference>
<dbReference type="GO" id="GO:0016805">
    <property type="term" value="F:dipeptidase activity"/>
    <property type="evidence" value="ECO:0007669"/>
    <property type="project" value="InterPro"/>
</dbReference>
<dbReference type="GO" id="GO:0006508">
    <property type="term" value="P:proteolysis"/>
    <property type="evidence" value="ECO:0007669"/>
    <property type="project" value="InterPro"/>
</dbReference>
<dbReference type="FunFam" id="3.60.60.10:FF:000001">
    <property type="entry name" value="Secernin 1"/>
    <property type="match status" value="1"/>
</dbReference>
<dbReference type="Gene3D" id="3.60.60.10">
    <property type="entry name" value="Penicillin V Acylase, Chain A"/>
    <property type="match status" value="1"/>
</dbReference>
<dbReference type="InterPro" id="IPR005322">
    <property type="entry name" value="Peptidase_C69"/>
</dbReference>
<dbReference type="PANTHER" id="PTHR12994">
    <property type="entry name" value="SECERNIN"/>
    <property type="match status" value="1"/>
</dbReference>
<dbReference type="PANTHER" id="PTHR12994:SF16">
    <property type="entry name" value="SECERNIN-2"/>
    <property type="match status" value="1"/>
</dbReference>
<dbReference type="Pfam" id="PF03577">
    <property type="entry name" value="Peptidase_C69"/>
    <property type="match status" value="1"/>
</dbReference>
<accession>Q96FV2</accession>
<accession>A8K3N1</accession>
<accession>B7Z8S7</accession>
<accession>E9PBV5</accession>
<accession>Q96AC3</accession>
<accession>Q9BU04</accession>
<proteinExistence type="evidence at protein level"/>
<reference key="1">
    <citation type="journal article" date="2004" name="Nat. Genet.">
        <title>Complete sequencing and characterization of 21,243 full-length human cDNAs.</title>
        <authorList>
            <person name="Ota T."/>
            <person name="Suzuki Y."/>
            <person name="Nishikawa T."/>
            <person name="Otsuki T."/>
            <person name="Sugiyama T."/>
            <person name="Irie R."/>
            <person name="Wakamatsu A."/>
            <person name="Hayashi K."/>
            <person name="Sato H."/>
            <person name="Nagai K."/>
            <person name="Kimura K."/>
            <person name="Makita H."/>
            <person name="Sekine M."/>
            <person name="Obayashi M."/>
            <person name="Nishi T."/>
            <person name="Shibahara T."/>
            <person name="Tanaka T."/>
            <person name="Ishii S."/>
            <person name="Yamamoto J."/>
            <person name="Saito K."/>
            <person name="Kawai Y."/>
            <person name="Isono Y."/>
            <person name="Nakamura Y."/>
            <person name="Nagahari K."/>
            <person name="Murakami K."/>
            <person name="Yasuda T."/>
            <person name="Iwayanagi T."/>
            <person name="Wagatsuma M."/>
            <person name="Shiratori A."/>
            <person name="Sudo H."/>
            <person name="Hosoiri T."/>
            <person name="Kaku Y."/>
            <person name="Kodaira H."/>
            <person name="Kondo H."/>
            <person name="Sugawara M."/>
            <person name="Takahashi M."/>
            <person name="Kanda K."/>
            <person name="Yokoi T."/>
            <person name="Furuya T."/>
            <person name="Kikkawa E."/>
            <person name="Omura Y."/>
            <person name="Abe K."/>
            <person name="Kamihara K."/>
            <person name="Katsuta N."/>
            <person name="Sato K."/>
            <person name="Tanikawa M."/>
            <person name="Yamazaki M."/>
            <person name="Ninomiya K."/>
            <person name="Ishibashi T."/>
            <person name="Yamashita H."/>
            <person name="Murakawa K."/>
            <person name="Fujimori K."/>
            <person name="Tanai H."/>
            <person name="Kimata M."/>
            <person name="Watanabe M."/>
            <person name="Hiraoka S."/>
            <person name="Chiba Y."/>
            <person name="Ishida S."/>
            <person name="Ono Y."/>
            <person name="Takiguchi S."/>
            <person name="Watanabe S."/>
            <person name="Yosida M."/>
            <person name="Hotuta T."/>
            <person name="Kusano J."/>
            <person name="Kanehori K."/>
            <person name="Takahashi-Fujii A."/>
            <person name="Hara H."/>
            <person name="Tanase T.-O."/>
            <person name="Nomura Y."/>
            <person name="Togiya S."/>
            <person name="Komai F."/>
            <person name="Hara R."/>
            <person name="Takeuchi K."/>
            <person name="Arita M."/>
            <person name="Imose N."/>
            <person name="Musashino K."/>
            <person name="Yuuki H."/>
            <person name="Oshima A."/>
            <person name="Sasaki N."/>
            <person name="Aotsuka S."/>
            <person name="Yoshikawa Y."/>
            <person name="Matsunawa H."/>
            <person name="Ichihara T."/>
            <person name="Shiohata N."/>
            <person name="Sano S."/>
            <person name="Moriya S."/>
            <person name="Momiyama H."/>
            <person name="Satoh N."/>
            <person name="Takami S."/>
            <person name="Terashima Y."/>
            <person name="Suzuki O."/>
            <person name="Nakagawa S."/>
            <person name="Senoh A."/>
            <person name="Mizoguchi H."/>
            <person name="Goto Y."/>
            <person name="Shimizu F."/>
            <person name="Wakebe H."/>
            <person name="Hishigaki H."/>
            <person name="Watanabe T."/>
            <person name="Sugiyama A."/>
            <person name="Takemoto M."/>
            <person name="Kawakami B."/>
            <person name="Yamazaki M."/>
            <person name="Watanabe K."/>
            <person name="Kumagai A."/>
            <person name="Itakura S."/>
            <person name="Fukuzumi Y."/>
            <person name="Fujimori Y."/>
            <person name="Komiyama M."/>
            <person name="Tashiro H."/>
            <person name="Tanigami A."/>
            <person name="Fujiwara T."/>
            <person name="Ono T."/>
            <person name="Yamada K."/>
            <person name="Fujii Y."/>
            <person name="Ozaki K."/>
            <person name="Hirao M."/>
            <person name="Ohmori Y."/>
            <person name="Kawabata A."/>
            <person name="Hikiji T."/>
            <person name="Kobatake N."/>
            <person name="Inagaki H."/>
            <person name="Ikema Y."/>
            <person name="Okamoto S."/>
            <person name="Okitani R."/>
            <person name="Kawakami T."/>
            <person name="Noguchi S."/>
            <person name="Itoh T."/>
            <person name="Shigeta K."/>
            <person name="Senba T."/>
            <person name="Matsumura K."/>
            <person name="Nakajima Y."/>
            <person name="Mizuno T."/>
            <person name="Morinaga M."/>
            <person name="Sasaki M."/>
            <person name="Togashi T."/>
            <person name="Oyama M."/>
            <person name="Hata H."/>
            <person name="Watanabe M."/>
            <person name="Komatsu T."/>
            <person name="Mizushima-Sugano J."/>
            <person name="Satoh T."/>
            <person name="Shirai Y."/>
            <person name="Takahashi Y."/>
            <person name="Nakagawa K."/>
            <person name="Okumura K."/>
            <person name="Nagase T."/>
            <person name="Nomura N."/>
            <person name="Kikuchi H."/>
            <person name="Masuho Y."/>
            <person name="Yamashita R."/>
            <person name="Nakai K."/>
            <person name="Yada T."/>
            <person name="Nakamura Y."/>
            <person name="Ohara O."/>
            <person name="Isogai T."/>
            <person name="Sugano S."/>
        </authorList>
    </citation>
    <scope>NUCLEOTIDE SEQUENCE [LARGE SCALE MRNA] (ISOFORMS 1 AND 2)</scope>
    <scope>VARIANT VAL-323</scope>
    <source>
        <tissue>Embryo</tissue>
        <tissue>Ovary</tissue>
    </source>
</reference>
<reference key="2">
    <citation type="journal article" date="2006" name="Nature">
        <title>DNA sequence of human chromosome 17 and analysis of rearrangement in the human lineage.</title>
        <authorList>
            <person name="Zody M.C."/>
            <person name="Garber M."/>
            <person name="Adams D.J."/>
            <person name="Sharpe T."/>
            <person name="Harrow J."/>
            <person name="Lupski J.R."/>
            <person name="Nicholson C."/>
            <person name="Searle S.M."/>
            <person name="Wilming L."/>
            <person name="Young S.K."/>
            <person name="Abouelleil A."/>
            <person name="Allen N.R."/>
            <person name="Bi W."/>
            <person name="Bloom T."/>
            <person name="Borowsky M.L."/>
            <person name="Bugalter B.E."/>
            <person name="Butler J."/>
            <person name="Chang J.L."/>
            <person name="Chen C.-K."/>
            <person name="Cook A."/>
            <person name="Corum B."/>
            <person name="Cuomo C.A."/>
            <person name="de Jong P.J."/>
            <person name="DeCaprio D."/>
            <person name="Dewar K."/>
            <person name="FitzGerald M."/>
            <person name="Gilbert J."/>
            <person name="Gibson R."/>
            <person name="Gnerre S."/>
            <person name="Goldstein S."/>
            <person name="Grafham D.V."/>
            <person name="Grocock R."/>
            <person name="Hafez N."/>
            <person name="Hagopian D.S."/>
            <person name="Hart E."/>
            <person name="Norman C.H."/>
            <person name="Humphray S."/>
            <person name="Jaffe D.B."/>
            <person name="Jones M."/>
            <person name="Kamal M."/>
            <person name="Khodiyar V.K."/>
            <person name="LaButti K."/>
            <person name="Laird G."/>
            <person name="Lehoczky J."/>
            <person name="Liu X."/>
            <person name="Lokyitsang T."/>
            <person name="Loveland J."/>
            <person name="Lui A."/>
            <person name="Macdonald P."/>
            <person name="Major J.E."/>
            <person name="Matthews L."/>
            <person name="Mauceli E."/>
            <person name="McCarroll S.A."/>
            <person name="Mihalev A.H."/>
            <person name="Mudge J."/>
            <person name="Nguyen C."/>
            <person name="Nicol R."/>
            <person name="O'Leary S.B."/>
            <person name="Osoegawa K."/>
            <person name="Schwartz D.C."/>
            <person name="Shaw-Smith C."/>
            <person name="Stankiewicz P."/>
            <person name="Steward C."/>
            <person name="Swarbreck D."/>
            <person name="Venkataraman V."/>
            <person name="Whittaker C.A."/>
            <person name="Yang X."/>
            <person name="Zimmer A.R."/>
            <person name="Bradley A."/>
            <person name="Hubbard T."/>
            <person name="Birren B.W."/>
            <person name="Rogers J."/>
            <person name="Lander E.S."/>
            <person name="Nusbaum C."/>
        </authorList>
    </citation>
    <scope>NUCLEOTIDE SEQUENCE [LARGE SCALE GENOMIC DNA]</scope>
</reference>
<reference key="3">
    <citation type="submission" date="2005-09" db="EMBL/GenBank/DDBJ databases">
        <authorList>
            <person name="Mural R.J."/>
            <person name="Istrail S."/>
            <person name="Sutton G.G."/>
            <person name="Florea L."/>
            <person name="Halpern A.L."/>
            <person name="Mobarry C.M."/>
            <person name="Lippert R."/>
            <person name="Walenz B."/>
            <person name="Shatkay H."/>
            <person name="Dew I."/>
            <person name="Miller J.R."/>
            <person name="Flanigan M.J."/>
            <person name="Edwards N.J."/>
            <person name="Bolanos R."/>
            <person name="Fasulo D."/>
            <person name="Halldorsson B.V."/>
            <person name="Hannenhalli S."/>
            <person name="Turner R."/>
            <person name="Yooseph S."/>
            <person name="Lu F."/>
            <person name="Nusskern D.R."/>
            <person name="Shue B.C."/>
            <person name="Zheng X.H."/>
            <person name="Zhong F."/>
            <person name="Delcher A.L."/>
            <person name="Huson D.H."/>
            <person name="Kravitz S.A."/>
            <person name="Mouchard L."/>
            <person name="Reinert K."/>
            <person name="Remington K.A."/>
            <person name="Clark A.G."/>
            <person name="Waterman M.S."/>
            <person name="Eichler E.E."/>
            <person name="Adams M.D."/>
            <person name="Hunkapiller M.W."/>
            <person name="Myers E.W."/>
            <person name="Venter J.C."/>
        </authorList>
    </citation>
    <scope>NUCLEOTIDE SEQUENCE [LARGE SCALE GENOMIC DNA]</scope>
    <scope>VARIANT VAL-323</scope>
</reference>
<reference key="4">
    <citation type="journal article" date="2004" name="Genome Res.">
        <title>The status, quality, and expansion of the NIH full-length cDNA project: the Mammalian Gene Collection (MGC).</title>
        <authorList>
            <consortium name="The MGC Project Team"/>
        </authorList>
    </citation>
    <scope>NUCLEOTIDE SEQUENCE [LARGE SCALE MRNA] (ISOFORMS 1 AND 2)</scope>
    <scope>VARIANTS ARG-103; VAL-323 AND GLY-411</scope>
    <source>
        <tissue>Lung</tissue>
        <tissue>Skin</tissue>
    </source>
</reference>
<reference key="5">
    <citation type="journal article" date="2011" name="BMC Syst. Biol.">
        <title>Initial characterization of the human central proteome.</title>
        <authorList>
            <person name="Burkard T.R."/>
            <person name="Planyavsky M."/>
            <person name="Kaupe I."/>
            <person name="Breitwieser F.P."/>
            <person name="Buerckstuemmer T."/>
            <person name="Bennett K.L."/>
            <person name="Superti-Furga G."/>
            <person name="Colinge J."/>
        </authorList>
    </citation>
    <scope>IDENTIFICATION BY MASS SPECTROMETRY [LARGE SCALE ANALYSIS]</scope>
</reference>
<reference key="6">
    <citation type="journal article" date="2013" name="J. Proteome Res.">
        <title>Toward a comprehensive characterization of a human cancer cell phosphoproteome.</title>
        <authorList>
            <person name="Zhou H."/>
            <person name="Di Palma S."/>
            <person name="Preisinger C."/>
            <person name="Peng M."/>
            <person name="Polat A.N."/>
            <person name="Heck A.J."/>
            <person name="Mohammed S."/>
        </authorList>
    </citation>
    <scope>PHOSPHORYLATION [LARGE SCALE ANALYSIS] AT THR-52</scope>
    <scope>IDENTIFICATION BY MASS SPECTROMETRY [LARGE SCALE ANALYSIS]</scope>
    <source>
        <tissue>Erythroleukemia</tissue>
    </source>
</reference>
<reference key="7">
    <citation type="journal article" date="2014" name="J. Proteomics">
        <title>An enzyme assisted RP-RPLC approach for in-depth analysis of human liver phosphoproteome.</title>
        <authorList>
            <person name="Bian Y."/>
            <person name="Song C."/>
            <person name="Cheng K."/>
            <person name="Dong M."/>
            <person name="Wang F."/>
            <person name="Huang J."/>
            <person name="Sun D."/>
            <person name="Wang L."/>
            <person name="Ye M."/>
            <person name="Zou H."/>
        </authorList>
    </citation>
    <scope>PHOSPHORYLATION [LARGE SCALE ANALYSIS] AT THR-52</scope>
    <scope>IDENTIFICATION BY MASS SPECTROMETRY [LARGE SCALE ANALYSIS]</scope>
    <source>
        <tissue>Liver</tissue>
    </source>
</reference>
<name>SCRN2_HUMAN</name>
<evidence type="ECO:0000255" key="1"/>
<evidence type="ECO:0000269" key="2">
    <source>
    </source>
</evidence>
<evidence type="ECO:0000269" key="3">
    <source>
    </source>
</evidence>
<evidence type="ECO:0000269" key="4">
    <source ref="3"/>
</evidence>
<evidence type="ECO:0000303" key="5">
    <source>
    </source>
</evidence>
<evidence type="ECO:0000303" key="6">
    <source>
    </source>
</evidence>
<evidence type="ECO:0000305" key="7"/>
<evidence type="ECO:0007744" key="8">
    <source>
    </source>
</evidence>
<evidence type="ECO:0007744" key="9">
    <source>
    </source>
</evidence>
<keyword id="KW-0025">Alternative splicing</keyword>
<keyword id="KW-0597">Phosphoprotein</keyword>
<keyword id="KW-1267">Proteomics identification</keyword>
<keyword id="KW-1185">Reference proteome</keyword>
<gene>
    <name type="primary">SCRN2</name>
</gene>